<accession>P38372</accession>
<accession>Q9JPW7</accession>
<accession>Q9WWJ3</accession>
<comment type="function">
    <text evidence="1">Catalyzes the reversible transfer of the terminal phosphate group between ATP and AMP. Plays an important role in cellular energy homeostasis and in adenine nucleotide metabolism.</text>
</comment>
<comment type="catalytic activity">
    <reaction evidence="1">
        <text>AMP + ATP = 2 ADP</text>
        <dbReference type="Rhea" id="RHEA:12973"/>
        <dbReference type="ChEBI" id="CHEBI:30616"/>
        <dbReference type="ChEBI" id="CHEBI:456215"/>
        <dbReference type="ChEBI" id="CHEBI:456216"/>
        <dbReference type="EC" id="2.7.4.3"/>
    </reaction>
</comment>
<comment type="pathway">
    <text evidence="1">Purine metabolism; AMP biosynthesis via salvage pathway; AMP from ADP: step 1/1.</text>
</comment>
<comment type="subunit">
    <text evidence="1">Monomer.</text>
</comment>
<comment type="subcellular location">
    <subcellularLocation>
        <location evidence="1">Cytoplasm</location>
    </subcellularLocation>
</comment>
<comment type="domain">
    <text evidence="1">Consists of three domains, a large central CORE domain and two small peripheral domains, NMPbind and LID, which undergo movements during catalysis. The LID domain closes over the site of phosphoryl transfer upon ATP binding. Assembling and dissambling the active center during each catalytic cycle provides an effective means to prevent ATP hydrolysis.</text>
</comment>
<comment type="similarity">
    <text evidence="1">Belongs to the adenylate kinase family.</text>
</comment>
<protein>
    <recommendedName>
        <fullName evidence="1">Adenylate kinase</fullName>
        <shortName evidence="1">AK</shortName>
        <ecNumber evidence="1">2.7.4.3</ecNumber>
    </recommendedName>
    <alternativeName>
        <fullName evidence="1">ATP-AMP transphosphorylase</fullName>
    </alternativeName>
    <alternativeName>
        <fullName evidence="1">ATP:AMP phosphotransferase</fullName>
    </alternativeName>
    <alternativeName>
        <fullName evidence="1">Adenylate monophosphate kinase</fullName>
    </alternativeName>
</protein>
<evidence type="ECO:0000255" key="1">
    <source>
        <dbReference type="HAMAP-Rule" id="MF_00235"/>
    </source>
</evidence>
<evidence type="ECO:0000305" key="2"/>
<organism>
    <name type="scientific">Halalkalibacterium halodurans (strain ATCC BAA-125 / DSM 18197 / FERM 7344 / JCM 9153 / C-125)</name>
    <name type="common">Bacillus halodurans</name>
    <dbReference type="NCBI Taxonomy" id="272558"/>
    <lineage>
        <taxon>Bacteria</taxon>
        <taxon>Bacillati</taxon>
        <taxon>Bacillota</taxon>
        <taxon>Bacilli</taxon>
        <taxon>Bacillales</taxon>
        <taxon>Bacillaceae</taxon>
        <taxon>Halalkalibacterium (ex Joshi et al. 2022)</taxon>
    </lineage>
</organism>
<keyword id="KW-0067">ATP-binding</keyword>
<keyword id="KW-0963">Cytoplasm</keyword>
<keyword id="KW-0418">Kinase</keyword>
<keyword id="KW-0545">Nucleotide biosynthesis</keyword>
<keyword id="KW-0547">Nucleotide-binding</keyword>
<keyword id="KW-1185">Reference proteome</keyword>
<keyword id="KW-0808">Transferase</keyword>
<proteinExistence type="inferred from homology"/>
<name>KAD_HALH5</name>
<gene>
    <name evidence="1" type="primary">adk</name>
    <name type="ordered locus">BH0155</name>
</gene>
<sequence length="217" mass="24170">MNLILMGLPGAGKGTQAEKIIEKYGIPHISTGDMFRAAMKNETELGLKAKSYMDAGELVPDEVTIGIVRDRLSQDDCQNGFLLDGFPRTVAQAEALEDILASLDKKLDYVINIDVPEQLLMDRLTGRRVSPTSGRTYHVIFNPPKVEGICDVDGSELIQRDDDKPETVKKRLEVNQKQAQPLIDFYSEKGYLQNINGDQDISRVFEDINELLKGLSS</sequence>
<dbReference type="EC" id="2.7.4.3" evidence="1"/>
<dbReference type="EMBL" id="AB017508">
    <property type="protein sequence ID" value="BAA75292.1"/>
    <property type="molecule type" value="Genomic_DNA"/>
</dbReference>
<dbReference type="EMBL" id="BA000004">
    <property type="protein sequence ID" value="BAB03874.1"/>
    <property type="molecule type" value="Genomic_DNA"/>
</dbReference>
<dbReference type="EMBL" id="D10360">
    <property type="protein sequence ID" value="BAA01192.1"/>
    <property type="molecule type" value="Genomic_DNA"/>
</dbReference>
<dbReference type="PIR" id="C44859">
    <property type="entry name" value="C44859"/>
</dbReference>
<dbReference type="PIR" id="T44404">
    <property type="entry name" value="T44404"/>
</dbReference>
<dbReference type="RefSeq" id="WP_010896338.1">
    <property type="nucleotide sequence ID" value="NC_002570.2"/>
</dbReference>
<dbReference type="SMR" id="P38372"/>
<dbReference type="STRING" id="272558.gene:10725995"/>
<dbReference type="GeneID" id="87595696"/>
<dbReference type="KEGG" id="bha:BH0155"/>
<dbReference type="eggNOG" id="COG0563">
    <property type="taxonomic scope" value="Bacteria"/>
</dbReference>
<dbReference type="HOGENOM" id="CLU_032354_1_2_9"/>
<dbReference type="OrthoDB" id="9805030at2"/>
<dbReference type="UniPathway" id="UPA00588">
    <property type="reaction ID" value="UER00649"/>
</dbReference>
<dbReference type="Proteomes" id="UP000001258">
    <property type="component" value="Chromosome"/>
</dbReference>
<dbReference type="GO" id="GO:0005737">
    <property type="term" value="C:cytoplasm"/>
    <property type="evidence" value="ECO:0007669"/>
    <property type="project" value="UniProtKB-SubCell"/>
</dbReference>
<dbReference type="GO" id="GO:0004017">
    <property type="term" value="F:adenylate kinase activity"/>
    <property type="evidence" value="ECO:0007669"/>
    <property type="project" value="UniProtKB-UniRule"/>
</dbReference>
<dbReference type="GO" id="GO:0005524">
    <property type="term" value="F:ATP binding"/>
    <property type="evidence" value="ECO:0007669"/>
    <property type="project" value="UniProtKB-UniRule"/>
</dbReference>
<dbReference type="GO" id="GO:0044209">
    <property type="term" value="P:AMP salvage"/>
    <property type="evidence" value="ECO:0007669"/>
    <property type="project" value="UniProtKB-UniRule"/>
</dbReference>
<dbReference type="CDD" id="cd01428">
    <property type="entry name" value="ADK"/>
    <property type="match status" value="1"/>
</dbReference>
<dbReference type="FunFam" id="3.40.50.300:FF:000106">
    <property type="entry name" value="Adenylate kinase mitochondrial"/>
    <property type="match status" value="1"/>
</dbReference>
<dbReference type="Gene3D" id="3.40.50.300">
    <property type="entry name" value="P-loop containing nucleotide triphosphate hydrolases"/>
    <property type="match status" value="1"/>
</dbReference>
<dbReference type="HAMAP" id="MF_00235">
    <property type="entry name" value="Adenylate_kinase_Adk"/>
    <property type="match status" value="1"/>
</dbReference>
<dbReference type="InterPro" id="IPR006259">
    <property type="entry name" value="Adenyl_kin_sub"/>
</dbReference>
<dbReference type="InterPro" id="IPR000850">
    <property type="entry name" value="Adenylat/UMP-CMP_kin"/>
</dbReference>
<dbReference type="InterPro" id="IPR033690">
    <property type="entry name" value="Adenylat_kinase_CS"/>
</dbReference>
<dbReference type="InterPro" id="IPR007862">
    <property type="entry name" value="Adenylate_kinase_lid-dom"/>
</dbReference>
<dbReference type="InterPro" id="IPR027417">
    <property type="entry name" value="P-loop_NTPase"/>
</dbReference>
<dbReference type="NCBIfam" id="TIGR01351">
    <property type="entry name" value="adk"/>
    <property type="match status" value="1"/>
</dbReference>
<dbReference type="NCBIfam" id="NF001379">
    <property type="entry name" value="PRK00279.1-1"/>
    <property type="match status" value="1"/>
</dbReference>
<dbReference type="NCBIfam" id="NF001380">
    <property type="entry name" value="PRK00279.1-2"/>
    <property type="match status" value="1"/>
</dbReference>
<dbReference type="NCBIfam" id="NF001381">
    <property type="entry name" value="PRK00279.1-3"/>
    <property type="match status" value="1"/>
</dbReference>
<dbReference type="NCBIfam" id="NF011100">
    <property type="entry name" value="PRK14527.1"/>
    <property type="match status" value="1"/>
</dbReference>
<dbReference type="PANTHER" id="PTHR23359">
    <property type="entry name" value="NUCLEOTIDE KINASE"/>
    <property type="match status" value="1"/>
</dbReference>
<dbReference type="Pfam" id="PF00406">
    <property type="entry name" value="ADK"/>
    <property type="match status" value="1"/>
</dbReference>
<dbReference type="Pfam" id="PF05191">
    <property type="entry name" value="ADK_lid"/>
    <property type="match status" value="1"/>
</dbReference>
<dbReference type="PRINTS" id="PR00094">
    <property type="entry name" value="ADENYLTKNASE"/>
</dbReference>
<dbReference type="SUPFAM" id="SSF52540">
    <property type="entry name" value="P-loop containing nucleoside triphosphate hydrolases"/>
    <property type="match status" value="1"/>
</dbReference>
<dbReference type="PROSITE" id="PS00113">
    <property type="entry name" value="ADENYLATE_KINASE"/>
    <property type="match status" value="1"/>
</dbReference>
<feature type="chain" id="PRO_0000158725" description="Adenylate kinase">
    <location>
        <begin position="1"/>
        <end position="217"/>
    </location>
</feature>
<feature type="region of interest" description="NMP" evidence="1">
    <location>
        <begin position="30"/>
        <end position="59"/>
    </location>
</feature>
<feature type="region of interest" description="LID" evidence="1">
    <location>
        <begin position="126"/>
        <end position="163"/>
    </location>
</feature>
<feature type="binding site" evidence="1">
    <location>
        <begin position="10"/>
        <end position="15"/>
    </location>
    <ligand>
        <name>ATP</name>
        <dbReference type="ChEBI" id="CHEBI:30616"/>
    </ligand>
</feature>
<feature type="binding site" evidence="1">
    <location>
        <position position="31"/>
    </location>
    <ligand>
        <name>AMP</name>
        <dbReference type="ChEBI" id="CHEBI:456215"/>
    </ligand>
</feature>
<feature type="binding site" evidence="1">
    <location>
        <position position="36"/>
    </location>
    <ligand>
        <name>AMP</name>
        <dbReference type="ChEBI" id="CHEBI:456215"/>
    </ligand>
</feature>
<feature type="binding site" evidence="1">
    <location>
        <begin position="57"/>
        <end position="59"/>
    </location>
    <ligand>
        <name>AMP</name>
        <dbReference type="ChEBI" id="CHEBI:456215"/>
    </ligand>
</feature>
<feature type="binding site" evidence="1">
    <location>
        <begin position="85"/>
        <end position="88"/>
    </location>
    <ligand>
        <name>AMP</name>
        <dbReference type="ChEBI" id="CHEBI:456215"/>
    </ligand>
</feature>
<feature type="binding site" evidence="1">
    <location>
        <position position="92"/>
    </location>
    <ligand>
        <name>AMP</name>
        <dbReference type="ChEBI" id="CHEBI:456215"/>
    </ligand>
</feature>
<feature type="binding site" evidence="1">
    <location>
        <position position="127"/>
    </location>
    <ligand>
        <name>ATP</name>
        <dbReference type="ChEBI" id="CHEBI:30616"/>
    </ligand>
</feature>
<feature type="binding site" evidence="1">
    <location>
        <begin position="136"/>
        <end position="137"/>
    </location>
    <ligand>
        <name>ATP</name>
        <dbReference type="ChEBI" id="CHEBI:30616"/>
    </ligand>
</feature>
<feature type="binding site" evidence="1">
    <location>
        <position position="160"/>
    </location>
    <ligand>
        <name>AMP</name>
        <dbReference type="ChEBI" id="CHEBI:456215"/>
    </ligand>
</feature>
<feature type="binding site" evidence="1">
    <location>
        <position position="171"/>
    </location>
    <ligand>
        <name>AMP</name>
        <dbReference type="ChEBI" id="CHEBI:456215"/>
    </ligand>
</feature>
<feature type="binding site" evidence="1">
    <location>
        <position position="199"/>
    </location>
    <ligand>
        <name>ATP</name>
        <dbReference type="ChEBI" id="CHEBI:30616"/>
    </ligand>
</feature>
<feature type="sequence conflict" description="In Ref. 3; BAA01192." evidence="2" ref="3">
    <original>I</original>
    <variation>N</variation>
    <location>
        <position position="4"/>
    </location>
</feature>
<reference key="1">
    <citation type="journal article" date="1999" name="Biosci. Biotechnol. Biochem.">
        <title>Sequence analysis of a 32-kb region including the major ribosomal protein gene clusters from alkaliphilic Bacillus sp. strain C-125.</title>
        <authorList>
            <person name="Takami H."/>
            <person name="Takaki Y."/>
            <person name="Nakasone K."/>
            <person name="Hirama C."/>
            <person name="Inoue A."/>
            <person name="Horikoshi K."/>
        </authorList>
    </citation>
    <scope>NUCLEOTIDE SEQUENCE [GENOMIC DNA]</scope>
    <source>
        <strain>ATCC BAA-125 / DSM 18197 / FERM 7344 / JCM 9153 / C-125</strain>
    </source>
</reference>
<reference key="2">
    <citation type="journal article" date="2000" name="Nucleic Acids Res.">
        <title>Complete genome sequence of the alkaliphilic bacterium Bacillus halodurans and genomic sequence comparison with Bacillus subtilis.</title>
        <authorList>
            <person name="Takami H."/>
            <person name="Nakasone K."/>
            <person name="Takaki Y."/>
            <person name="Maeno G."/>
            <person name="Sasaki R."/>
            <person name="Masui N."/>
            <person name="Fuji F."/>
            <person name="Hirama C."/>
            <person name="Nakamura Y."/>
            <person name="Ogasawara N."/>
            <person name="Kuhara S."/>
            <person name="Horikoshi K."/>
        </authorList>
    </citation>
    <scope>NUCLEOTIDE SEQUENCE [LARGE SCALE GENOMIC DNA]</scope>
    <source>
        <strain>ATCC BAA-125 / DSM 18197 / FERM 7344 / JCM 9153 / C-125</strain>
    </source>
</reference>
<reference key="3">
    <citation type="journal article" date="1992" name="J. Gen. Microbiol.">
        <title>Molecular cloning and characterization of an alkalophilic Bacillus sp. C125 gene homologous to Bacillus subtilis secY.</title>
        <authorList>
            <person name="Kang S.K."/>
            <person name="Kudo T."/>
            <person name="Horikoshi K."/>
        </authorList>
    </citation>
    <scope>NUCLEOTIDE SEQUENCE [GENOMIC DNA] OF 1-107</scope>
    <source>
        <strain>ATCC BAA-125 / DSM 18197 / FERM 7344 / JCM 9153 / C-125</strain>
    </source>
</reference>